<dbReference type="EMBL" id="AE014299">
    <property type="protein sequence ID" value="AAN55348.1"/>
    <property type="molecule type" value="Genomic_DNA"/>
</dbReference>
<dbReference type="RefSeq" id="NP_717904.1">
    <property type="nucleotide sequence ID" value="NC_004347.2"/>
</dbReference>
<dbReference type="RefSeq" id="WP_011072309.1">
    <property type="nucleotide sequence ID" value="NC_004347.2"/>
</dbReference>
<dbReference type="SMR" id="Q8EER0"/>
<dbReference type="STRING" id="211586.SO_2309"/>
<dbReference type="PaxDb" id="211586-SO_2309"/>
<dbReference type="KEGG" id="son:SO_2309"/>
<dbReference type="PATRIC" id="fig|211586.12.peg.2224"/>
<dbReference type="eggNOG" id="COG0239">
    <property type="taxonomic scope" value="Bacteria"/>
</dbReference>
<dbReference type="HOGENOM" id="CLU_114342_3_0_6"/>
<dbReference type="OrthoDB" id="9806299at2"/>
<dbReference type="PhylomeDB" id="Q8EER0"/>
<dbReference type="BioCyc" id="SONE211586:G1GMP-2111-MONOMER"/>
<dbReference type="Proteomes" id="UP000008186">
    <property type="component" value="Chromosome"/>
</dbReference>
<dbReference type="GO" id="GO:0005886">
    <property type="term" value="C:plasma membrane"/>
    <property type="evidence" value="ECO:0000318"/>
    <property type="project" value="GO_Central"/>
</dbReference>
<dbReference type="GO" id="GO:0062054">
    <property type="term" value="F:fluoride channel activity"/>
    <property type="evidence" value="ECO:0007669"/>
    <property type="project" value="UniProtKB-UniRule"/>
</dbReference>
<dbReference type="GO" id="GO:1903425">
    <property type="term" value="F:fluoride transmembrane transporter activity"/>
    <property type="evidence" value="ECO:0000318"/>
    <property type="project" value="GO_Central"/>
</dbReference>
<dbReference type="GO" id="GO:0046872">
    <property type="term" value="F:metal ion binding"/>
    <property type="evidence" value="ECO:0007669"/>
    <property type="project" value="UniProtKB-KW"/>
</dbReference>
<dbReference type="GO" id="GO:0140114">
    <property type="term" value="P:cellular detoxification of fluoride"/>
    <property type="evidence" value="ECO:0007669"/>
    <property type="project" value="UniProtKB-UniRule"/>
</dbReference>
<dbReference type="GO" id="GO:1903424">
    <property type="term" value="P:fluoride transmembrane transport"/>
    <property type="evidence" value="ECO:0000318"/>
    <property type="project" value="GO_Central"/>
</dbReference>
<dbReference type="HAMAP" id="MF_00454">
    <property type="entry name" value="FluC"/>
    <property type="match status" value="1"/>
</dbReference>
<dbReference type="InterPro" id="IPR003691">
    <property type="entry name" value="FluC"/>
</dbReference>
<dbReference type="NCBIfam" id="TIGR00494">
    <property type="entry name" value="crcB"/>
    <property type="match status" value="1"/>
</dbReference>
<dbReference type="PANTHER" id="PTHR28259">
    <property type="entry name" value="FLUORIDE EXPORT PROTEIN 1-RELATED"/>
    <property type="match status" value="1"/>
</dbReference>
<dbReference type="PANTHER" id="PTHR28259:SF1">
    <property type="entry name" value="FLUORIDE EXPORT PROTEIN 1-RELATED"/>
    <property type="match status" value="1"/>
</dbReference>
<dbReference type="Pfam" id="PF02537">
    <property type="entry name" value="CRCB"/>
    <property type="match status" value="1"/>
</dbReference>
<protein>
    <recommendedName>
        <fullName evidence="1">Fluoride-specific ion channel FluC</fullName>
    </recommendedName>
</protein>
<feature type="chain" id="PRO_0000110170" description="Fluoride-specific ion channel FluC">
    <location>
        <begin position="1"/>
        <end position="124"/>
    </location>
</feature>
<feature type="transmembrane region" description="Helical" evidence="1">
    <location>
        <begin position="4"/>
        <end position="24"/>
    </location>
</feature>
<feature type="transmembrane region" description="Helical" evidence="1">
    <location>
        <begin position="35"/>
        <end position="55"/>
    </location>
</feature>
<feature type="transmembrane region" description="Helical" evidence="1">
    <location>
        <begin position="60"/>
        <end position="80"/>
    </location>
</feature>
<feature type="transmembrane region" description="Helical" evidence="1">
    <location>
        <begin position="102"/>
        <end position="122"/>
    </location>
</feature>
<feature type="binding site" evidence="1">
    <location>
        <position position="74"/>
    </location>
    <ligand>
        <name>Na(+)</name>
        <dbReference type="ChEBI" id="CHEBI:29101"/>
        <note>structural</note>
    </ligand>
</feature>
<feature type="binding site" evidence="1">
    <location>
        <position position="77"/>
    </location>
    <ligand>
        <name>Na(+)</name>
        <dbReference type="ChEBI" id="CHEBI:29101"/>
        <note>structural</note>
    </ligand>
</feature>
<organism>
    <name type="scientific">Shewanella oneidensis (strain ATCC 700550 / JCM 31522 / CIP 106686 / LMG 19005 / NCIMB 14063 / MR-1)</name>
    <dbReference type="NCBI Taxonomy" id="211586"/>
    <lineage>
        <taxon>Bacteria</taxon>
        <taxon>Pseudomonadati</taxon>
        <taxon>Pseudomonadota</taxon>
        <taxon>Gammaproteobacteria</taxon>
        <taxon>Alteromonadales</taxon>
        <taxon>Shewanellaceae</taxon>
        <taxon>Shewanella</taxon>
    </lineage>
</organism>
<accession>Q8EER0</accession>
<reference key="1">
    <citation type="journal article" date="2002" name="Nat. Biotechnol.">
        <title>Genome sequence of the dissimilatory metal ion-reducing bacterium Shewanella oneidensis.</title>
        <authorList>
            <person name="Heidelberg J.F."/>
            <person name="Paulsen I.T."/>
            <person name="Nelson K.E."/>
            <person name="Gaidos E.J."/>
            <person name="Nelson W.C."/>
            <person name="Read T.D."/>
            <person name="Eisen J.A."/>
            <person name="Seshadri R."/>
            <person name="Ward N.L."/>
            <person name="Methe B.A."/>
            <person name="Clayton R.A."/>
            <person name="Meyer T."/>
            <person name="Tsapin A."/>
            <person name="Scott J."/>
            <person name="Beanan M.J."/>
            <person name="Brinkac L.M."/>
            <person name="Daugherty S.C."/>
            <person name="DeBoy R.T."/>
            <person name="Dodson R.J."/>
            <person name="Durkin A.S."/>
            <person name="Haft D.H."/>
            <person name="Kolonay J.F."/>
            <person name="Madupu R."/>
            <person name="Peterson J.D."/>
            <person name="Umayam L.A."/>
            <person name="White O."/>
            <person name="Wolf A.M."/>
            <person name="Vamathevan J.J."/>
            <person name="Weidman J.F."/>
            <person name="Impraim M."/>
            <person name="Lee K."/>
            <person name="Berry K.J."/>
            <person name="Lee C."/>
            <person name="Mueller J."/>
            <person name="Khouri H.M."/>
            <person name="Gill J."/>
            <person name="Utterback T.R."/>
            <person name="McDonald L.A."/>
            <person name="Feldblyum T.V."/>
            <person name="Smith H.O."/>
            <person name="Venter J.C."/>
            <person name="Nealson K.H."/>
            <person name="Fraser C.M."/>
        </authorList>
    </citation>
    <scope>NUCLEOTIDE SEQUENCE [LARGE SCALE GENOMIC DNA]</scope>
    <source>
        <strain>ATCC 700550 / JCM 31522 / CIP 106686 / LMG 19005 / NCIMB 14063 / MR-1</strain>
    </source>
</reference>
<proteinExistence type="inferred from homology"/>
<evidence type="ECO:0000255" key="1">
    <source>
        <dbReference type="HAMAP-Rule" id="MF_00454"/>
    </source>
</evidence>
<name>FLUC_SHEON</name>
<gene>
    <name evidence="1" type="primary">fluC</name>
    <name evidence="1" type="synonym">crcB</name>
    <name type="ordered locus">SO_2309</name>
</gene>
<keyword id="KW-0997">Cell inner membrane</keyword>
<keyword id="KW-1003">Cell membrane</keyword>
<keyword id="KW-0407">Ion channel</keyword>
<keyword id="KW-0406">Ion transport</keyword>
<keyword id="KW-0472">Membrane</keyword>
<keyword id="KW-0479">Metal-binding</keyword>
<keyword id="KW-1185">Reference proteome</keyword>
<keyword id="KW-0915">Sodium</keyword>
<keyword id="KW-0812">Transmembrane</keyword>
<keyword id="KW-1133">Transmembrane helix</keyword>
<keyword id="KW-0813">Transport</keyword>
<sequence length="124" mass="13458">MNNLLLVALGGSIGAVFRYLISIFMIQVFGSSFPFGTLLVNVLGSFLMGVIYALGQMSHISPEFKALIGVGLLGALTTFSTFSNETLLLMQEGDWLKAALNVVLNLSLCLFMVYLGQQLVFSRI</sequence>
<comment type="function">
    <text evidence="1">Fluoride-specific ion channel. Important for reducing fluoride concentration in the cell, thus reducing its toxicity.</text>
</comment>
<comment type="catalytic activity">
    <reaction evidence="1">
        <text>fluoride(in) = fluoride(out)</text>
        <dbReference type="Rhea" id="RHEA:76159"/>
        <dbReference type="ChEBI" id="CHEBI:17051"/>
    </reaction>
    <physiologicalReaction direction="left-to-right" evidence="1">
        <dbReference type="Rhea" id="RHEA:76160"/>
    </physiologicalReaction>
</comment>
<comment type="activity regulation">
    <text evidence="1">Na(+) is not transported, but it plays an essential structural role and its presence is essential for fluoride channel function.</text>
</comment>
<comment type="subcellular location">
    <subcellularLocation>
        <location evidence="1">Cell inner membrane</location>
        <topology evidence="1">Multi-pass membrane protein</topology>
    </subcellularLocation>
</comment>
<comment type="similarity">
    <text evidence="1">Belongs to the fluoride channel Fluc/FEX (TC 1.A.43) family.</text>
</comment>